<dbReference type="EC" id="2.7.1.33" evidence="1"/>
<dbReference type="EMBL" id="CP001043">
    <property type="protein sequence ID" value="ACC69396.1"/>
    <property type="molecule type" value="Genomic_DNA"/>
</dbReference>
<dbReference type="RefSeq" id="WP_012399625.1">
    <property type="nucleotide sequence ID" value="NC_010622.1"/>
</dbReference>
<dbReference type="SMR" id="B2JKK7"/>
<dbReference type="STRING" id="391038.Bphy_0203"/>
<dbReference type="KEGG" id="bph:Bphy_0203"/>
<dbReference type="eggNOG" id="COG1521">
    <property type="taxonomic scope" value="Bacteria"/>
</dbReference>
<dbReference type="HOGENOM" id="CLU_066627_0_0_4"/>
<dbReference type="OrthoDB" id="9781305at2"/>
<dbReference type="UniPathway" id="UPA00241">
    <property type="reaction ID" value="UER00352"/>
</dbReference>
<dbReference type="Proteomes" id="UP000001192">
    <property type="component" value="Chromosome 1"/>
</dbReference>
<dbReference type="GO" id="GO:0005737">
    <property type="term" value="C:cytoplasm"/>
    <property type="evidence" value="ECO:0007669"/>
    <property type="project" value="UniProtKB-SubCell"/>
</dbReference>
<dbReference type="GO" id="GO:0005524">
    <property type="term" value="F:ATP binding"/>
    <property type="evidence" value="ECO:0007669"/>
    <property type="project" value="UniProtKB-UniRule"/>
</dbReference>
<dbReference type="GO" id="GO:0004594">
    <property type="term" value="F:pantothenate kinase activity"/>
    <property type="evidence" value="ECO:0007669"/>
    <property type="project" value="UniProtKB-UniRule"/>
</dbReference>
<dbReference type="GO" id="GO:0015937">
    <property type="term" value="P:coenzyme A biosynthetic process"/>
    <property type="evidence" value="ECO:0007669"/>
    <property type="project" value="UniProtKB-UniRule"/>
</dbReference>
<dbReference type="CDD" id="cd24015">
    <property type="entry name" value="ASKHA_NBD_PanK-III"/>
    <property type="match status" value="1"/>
</dbReference>
<dbReference type="Gene3D" id="3.30.420.40">
    <property type="match status" value="2"/>
</dbReference>
<dbReference type="HAMAP" id="MF_01274">
    <property type="entry name" value="Pantothen_kinase_3"/>
    <property type="match status" value="1"/>
</dbReference>
<dbReference type="InterPro" id="IPR043129">
    <property type="entry name" value="ATPase_NBD"/>
</dbReference>
<dbReference type="InterPro" id="IPR004619">
    <property type="entry name" value="Type_III_PanK"/>
</dbReference>
<dbReference type="NCBIfam" id="TIGR00671">
    <property type="entry name" value="baf"/>
    <property type="match status" value="1"/>
</dbReference>
<dbReference type="NCBIfam" id="NF009868">
    <property type="entry name" value="PRK13328.1-4"/>
    <property type="match status" value="1"/>
</dbReference>
<dbReference type="PANTHER" id="PTHR34265">
    <property type="entry name" value="TYPE III PANTOTHENATE KINASE"/>
    <property type="match status" value="1"/>
</dbReference>
<dbReference type="PANTHER" id="PTHR34265:SF1">
    <property type="entry name" value="TYPE III PANTOTHENATE KINASE"/>
    <property type="match status" value="1"/>
</dbReference>
<dbReference type="Pfam" id="PF03309">
    <property type="entry name" value="Pan_kinase"/>
    <property type="match status" value="1"/>
</dbReference>
<dbReference type="SUPFAM" id="SSF53067">
    <property type="entry name" value="Actin-like ATPase domain"/>
    <property type="match status" value="2"/>
</dbReference>
<evidence type="ECO:0000255" key="1">
    <source>
        <dbReference type="HAMAP-Rule" id="MF_01274"/>
    </source>
</evidence>
<gene>
    <name evidence="1" type="primary">coaX</name>
    <name type="ordered locus">Bphy_0203</name>
</gene>
<accession>B2JKK7</accession>
<reference key="1">
    <citation type="journal article" date="2014" name="Stand. Genomic Sci.">
        <title>Complete genome sequence of Burkholderia phymatum STM815(T), a broad host range and efficient nitrogen-fixing symbiont of Mimosa species.</title>
        <authorList>
            <person name="Moulin L."/>
            <person name="Klonowska A."/>
            <person name="Caroline B."/>
            <person name="Booth K."/>
            <person name="Vriezen J.A."/>
            <person name="Melkonian R."/>
            <person name="James E.K."/>
            <person name="Young J.P."/>
            <person name="Bena G."/>
            <person name="Hauser L."/>
            <person name="Land M."/>
            <person name="Kyrpides N."/>
            <person name="Bruce D."/>
            <person name="Chain P."/>
            <person name="Copeland A."/>
            <person name="Pitluck S."/>
            <person name="Woyke T."/>
            <person name="Lizotte-Waniewski M."/>
            <person name="Bristow J."/>
            <person name="Riley M."/>
        </authorList>
    </citation>
    <scope>NUCLEOTIDE SEQUENCE [LARGE SCALE GENOMIC DNA]</scope>
    <source>
        <strain>DSM 17167 / CIP 108236 / LMG 21445 / STM815</strain>
    </source>
</reference>
<organism>
    <name type="scientific">Paraburkholderia phymatum (strain DSM 17167 / CIP 108236 / LMG 21445 / STM815)</name>
    <name type="common">Burkholderia phymatum</name>
    <dbReference type="NCBI Taxonomy" id="391038"/>
    <lineage>
        <taxon>Bacteria</taxon>
        <taxon>Pseudomonadati</taxon>
        <taxon>Pseudomonadota</taxon>
        <taxon>Betaproteobacteria</taxon>
        <taxon>Burkholderiales</taxon>
        <taxon>Burkholderiaceae</taxon>
        <taxon>Paraburkholderia</taxon>
    </lineage>
</organism>
<keyword id="KW-0067">ATP-binding</keyword>
<keyword id="KW-0173">Coenzyme A biosynthesis</keyword>
<keyword id="KW-0963">Cytoplasm</keyword>
<keyword id="KW-0418">Kinase</keyword>
<keyword id="KW-0547">Nucleotide-binding</keyword>
<keyword id="KW-0630">Potassium</keyword>
<keyword id="KW-1185">Reference proteome</keyword>
<keyword id="KW-0808">Transferase</keyword>
<proteinExistence type="inferred from homology"/>
<name>COAX_PARP8</name>
<feature type="chain" id="PRO_1000140229" description="Type III pantothenate kinase">
    <location>
        <begin position="1"/>
        <end position="289"/>
    </location>
</feature>
<feature type="active site" description="Proton acceptor" evidence="1">
    <location>
        <position position="115"/>
    </location>
</feature>
<feature type="binding site" evidence="1">
    <location>
        <begin position="9"/>
        <end position="16"/>
    </location>
    <ligand>
        <name>ATP</name>
        <dbReference type="ChEBI" id="CHEBI:30616"/>
    </ligand>
</feature>
<feature type="binding site" evidence="1">
    <location>
        <position position="106"/>
    </location>
    <ligand>
        <name>substrate</name>
    </ligand>
</feature>
<feature type="binding site" evidence="1">
    <location>
        <begin position="113"/>
        <end position="116"/>
    </location>
    <ligand>
        <name>substrate</name>
    </ligand>
</feature>
<feature type="binding site" evidence="1">
    <location>
        <position position="139"/>
    </location>
    <ligand>
        <name>ATP</name>
        <dbReference type="ChEBI" id="CHEBI:30616"/>
    </ligand>
</feature>
<feature type="binding site" evidence="1">
    <location>
        <position position="209"/>
    </location>
    <ligand>
        <name>substrate</name>
    </ligand>
</feature>
<sequence>MSTPYLLIDAGNSRVKWALVQADGTQTHSGAFSHGGQLVKGTGDPLQSRHEPDWSALPAPGSAWLSNVAGDAVARRIDAFIDRHWPGLARTTVRSAAQQCGVTNAYTTPSQLGSDRWAGMIGARAAFPGEPLLIATFGTATTLEALTADGVFVGGLIAPGWSLMMRSLGEHTAQLPTLDSTAARGLLDGDNAAGQREPAERGAWFATDTPRSLSSGCALAQIGLIERMWRHLQDEWQVSVRLVVGGGAAGELVQALSVPYTRHDSLVLAGLALIAAQAPVYPSTHTRPV</sequence>
<comment type="function">
    <text evidence="1">Catalyzes the phosphorylation of pantothenate (Pan), the first step in CoA biosynthesis.</text>
</comment>
<comment type="catalytic activity">
    <reaction evidence="1">
        <text>(R)-pantothenate + ATP = (R)-4'-phosphopantothenate + ADP + H(+)</text>
        <dbReference type="Rhea" id="RHEA:16373"/>
        <dbReference type="ChEBI" id="CHEBI:10986"/>
        <dbReference type="ChEBI" id="CHEBI:15378"/>
        <dbReference type="ChEBI" id="CHEBI:29032"/>
        <dbReference type="ChEBI" id="CHEBI:30616"/>
        <dbReference type="ChEBI" id="CHEBI:456216"/>
        <dbReference type="EC" id="2.7.1.33"/>
    </reaction>
</comment>
<comment type="cofactor">
    <cofactor evidence="1">
        <name>NH4(+)</name>
        <dbReference type="ChEBI" id="CHEBI:28938"/>
    </cofactor>
    <cofactor evidence="1">
        <name>K(+)</name>
        <dbReference type="ChEBI" id="CHEBI:29103"/>
    </cofactor>
    <text evidence="1">A monovalent cation. Ammonium or potassium.</text>
</comment>
<comment type="pathway">
    <text evidence="1">Cofactor biosynthesis; coenzyme A biosynthesis; CoA from (R)-pantothenate: step 1/5.</text>
</comment>
<comment type="subunit">
    <text evidence="1">Homodimer.</text>
</comment>
<comment type="subcellular location">
    <subcellularLocation>
        <location evidence="1">Cytoplasm</location>
    </subcellularLocation>
</comment>
<comment type="similarity">
    <text evidence="1">Belongs to the type III pantothenate kinase family.</text>
</comment>
<protein>
    <recommendedName>
        <fullName evidence="1">Type III pantothenate kinase</fullName>
        <ecNumber evidence="1">2.7.1.33</ecNumber>
    </recommendedName>
    <alternativeName>
        <fullName evidence="1">PanK-III</fullName>
    </alternativeName>
    <alternativeName>
        <fullName evidence="1">Pantothenic acid kinase</fullName>
    </alternativeName>
</protein>